<name>ARAFA_BIFL2</name>
<keyword id="KW-0119">Carbohydrate metabolism</keyword>
<keyword id="KW-1003">Cell membrane</keyword>
<keyword id="KW-0326">Glycosidase</keyword>
<keyword id="KW-0378">Hydrolase</keyword>
<keyword id="KW-0472">Membrane</keyword>
<keyword id="KW-0732">Signal</keyword>
<keyword id="KW-0812">Transmembrane</keyword>
<keyword id="KW-1133">Transmembrane helix</keyword>
<sequence length="1065" mass="113682">MKHWKKMAASLIAISTMVAVVPTTYAMESEDSQPQTTDTATVQTTKAAEPTLLASWDFTGKNGTTNSAIADSTGKYNLTLKDGAKIEQYGDRSNNEALSLRGDGQYAQIDDQLFKDAGDSFTLEFASKTRHDDSGKFFSFIVGKDGSNDANTTDQANANKYLMFYNSKTAIKGVISNNNWGNEQGSKVTVSGNDNSWADYKIVVDGTNLAVFRNNALIIFKANTGIKMSDLGATTAYIGKSFYSVDEYWNGAMDDIKVYRGADLTMPTAVAISGTGVVNNKLTLIEKDSTKLTATVTPDDAVSKNVTWSSSDESVAKVAADGTVTGVKAGTATITATTELGGVKAELPVTVEPMNAQNAAAADLDAAIAALKVPAAENLPLVAKGTKNGSAITWKSSDEKLITSTNEKYENRTTGADDPYRGAGIINRPAYGDGDSKPVTLTATASYNGGEKVTKTIEVTVKEKTRIAPDTGYAAVTFESDSNGGEKAWVASTEKNDFFTFKTRNNGQAVLTNDADTGGLRDMFVLRSHEGDKYYLIATDLKVSSMGWSQNQVNGSRKVEVYESTDMMNWTRTNGDGNGGITINTPNAGMTWAPEAYWDDDLNAYVVFFSSRMFTDDTRTTPVKNDKTGNSSYAQVRYAITRDFVNFTEPQMWQDTGYSRIDSTVRKIGGYYYRFTKNEQGGAAGDYITTGKSIFLERSKVLTAPTTEASPGQDPNTGWQLLEQALLPFEGPETIKLNKDDELNTKDDDGYILLSDNFAYRAFMTTGAELSKTTWDNPMTKRYPDFNNEKKPVKAEPGAQGYITQGANGGLPDKVRHGAFVNVPESVLKVTKSWTAANPTHIEAVDSTTKAVYNAGTRELTATVTSADKGTLAGSVKFSAGDWSKTVKLDAEGKATVTLPASVSGTVAVAYDGYTDGLVNPSDTTVDGIEQGKVDLAELNKQIAAAEALKESDYTADSWAKLAAALKTAKAALAAENQGEVDTAAADLKTAIEALQKAPTNPGEGDGDKGDGNKPTTPTTGDKTNVNKPGSALSNTGTAVLGLGGAVVALAIAGISLTLWRKRRA</sequence>
<feature type="signal peptide" evidence="1">
    <location>
        <begin position="1"/>
        <end position="26"/>
    </location>
</feature>
<feature type="chain" id="PRO_5018696848" description="Alpha-L-arabinofuranosidase">
    <location>
        <begin position="27"/>
        <end position="1065"/>
    </location>
</feature>
<feature type="transmembrane region" description="Helical" evidence="1">
    <location>
        <begin position="1040"/>
        <end position="1060"/>
    </location>
</feature>
<feature type="domain" description="BIG2" evidence="1">
    <location>
        <begin position="277"/>
        <end position="346"/>
    </location>
</feature>
<feature type="region of interest" description="Disordered" evidence="2">
    <location>
        <begin position="997"/>
        <end position="1031"/>
    </location>
</feature>
<feature type="compositionally biased region" description="Polar residues" evidence="2">
    <location>
        <begin position="1014"/>
        <end position="1031"/>
    </location>
</feature>
<dbReference type="EC" id="3.2.1.55" evidence="3"/>
<dbReference type="EMBL" id="BR001495">
    <property type="protein sequence ID" value="FAA01257.1"/>
    <property type="molecule type" value="Genomic_DNA"/>
</dbReference>
<dbReference type="EMBL" id="AP010888">
    <property type="protein sequence ID" value="BAJ67518.1"/>
    <property type="molecule type" value="Genomic_DNA"/>
</dbReference>
<dbReference type="RefSeq" id="WP_013583011.1">
    <property type="nucleotide sequence ID" value="NC_015067.1"/>
</dbReference>
<dbReference type="GeneID" id="69579067"/>
<dbReference type="KEGG" id="blm:BLLJ_1854"/>
<dbReference type="GO" id="GO:0005886">
    <property type="term" value="C:plasma membrane"/>
    <property type="evidence" value="ECO:0007669"/>
    <property type="project" value="UniProtKB-SubCell"/>
</dbReference>
<dbReference type="GO" id="GO:0046556">
    <property type="term" value="F:alpha-L-arabinofuranosidase activity"/>
    <property type="evidence" value="ECO:0007669"/>
    <property type="project" value="UniProtKB-EC"/>
</dbReference>
<dbReference type="CDD" id="cd08983">
    <property type="entry name" value="GH43_Bt3655-like"/>
    <property type="match status" value="1"/>
</dbReference>
<dbReference type="Gene3D" id="2.60.40.1080">
    <property type="match status" value="1"/>
</dbReference>
<dbReference type="Gene3D" id="1.20.1270.90">
    <property type="entry name" value="AF1782-like"/>
    <property type="match status" value="1"/>
</dbReference>
<dbReference type="Gene3D" id="2.115.10.20">
    <property type="entry name" value="Glycosyl hydrolase domain, family 43"/>
    <property type="match status" value="1"/>
</dbReference>
<dbReference type="InterPro" id="IPR046780">
    <property type="entry name" value="aBig_2"/>
</dbReference>
<dbReference type="InterPro" id="IPR003343">
    <property type="entry name" value="Big_2"/>
</dbReference>
<dbReference type="InterPro" id="IPR013320">
    <property type="entry name" value="ConA-like_dom_sf"/>
</dbReference>
<dbReference type="InterPro" id="IPR023296">
    <property type="entry name" value="Glyco_hydro_beta-prop_sf"/>
</dbReference>
<dbReference type="InterPro" id="IPR008964">
    <property type="entry name" value="Invasin/intimin_cell_adhesion"/>
</dbReference>
<dbReference type="Pfam" id="PF20578">
    <property type="entry name" value="aBig_2"/>
    <property type="match status" value="1"/>
</dbReference>
<dbReference type="Pfam" id="PF02368">
    <property type="entry name" value="Big_2"/>
    <property type="match status" value="1"/>
</dbReference>
<dbReference type="SMART" id="SM00635">
    <property type="entry name" value="BID_2"/>
    <property type="match status" value="1"/>
</dbReference>
<dbReference type="SUPFAM" id="SSF75005">
    <property type="entry name" value="Arabinanase/levansucrase/invertase"/>
    <property type="match status" value="1"/>
</dbReference>
<dbReference type="SUPFAM" id="SSF49899">
    <property type="entry name" value="Concanavalin A-like lectins/glucanases"/>
    <property type="match status" value="1"/>
</dbReference>
<dbReference type="SUPFAM" id="SSF49373">
    <property type="entry name" value="Invasin/intimin cell-adhesion fragments"/>
    <property type="match status" value="1"/>
</dbReference>
<evidence type="ECO:0000255" key="1"/>
<evidence type="ECO:0000256" key="2">
    <source>
        <dbReference type="SAM" id="MobiDB-lite"/>
    </source>
</evidence>
<evidence type="ECO:0000269" key="3">
    <source>
    </source>
</evidence>
<evidence type="ECO:0000303" key="4">
    <source>
    </source>
</evidence>
<evidence type="ECO:0000305" key="5"/>
<evidence type="ECO:0000312" key="6">
    <source>
        <dbReference type="EMBL" id="BAJ67518.1"/>
    </source>
</evidence>
<gene>
    <name evidence="4" type="primary">blArafA</name>
    <name evidence="6" type="ordered locus">BLLJ_1854</name>
</gene>
<reference key="1">
    <citation type="journal article" date="2019" name="Appl. Microbiol. Biotechnol.">
        <title>Degradative enzymes for type II arabinogalactan side chains in Bifidobacterium longum subsp. longum.</title>
        <authorList>
            <person name="Fujita K."/>
            <person name="Sakamoto A."/>
            <person name="Kaneko S."/>
            <person name="Kotake T."/>
            <person name="Tsumuraya Y."/>
            <person name="Kitahara K."/>
        </authorList>
    </citation>
    <scope>NUCLEOTIDE SEQUENCE [GENOMIC DNA]</scope>
    <scope>FUNCTION</scope>
    <scope>CATALYTIC ACTIVITY</scope>
    <scope>BIOPHYSICOCHEMICAL PROPERTIES</scope>
    <source>
        <strain>ATCC 15707 / DSM 20219 / CCUG 28903 / JCM 1217 / NCIMB 702259 / NCTC 11818 / E194b</strain>
    </source>
</reference>
<reference key="2">
    <citation type="journal article" date="2011" name="Nature">
        <title>Bifidobacteria can protect from enteropathogenic infection through production of acetate.</title>
        <authorList>
            <person name="Fukuda S."/>
            <person name="Toh H."/>
            <person name="Hase K."/>
            <person name="Oshima K."/>
            <person name="Nakanishi Y."/>
            <person name="Yoshimura K."/>
            <person name="Tobe T."/>
            <person name="Clarke J.M."/>
            <person name="Topping D.L."/>
            <person name="Suzuki T."/>
            <person name="Taylor T.D."/>
            <person name="Itoh K."/>
            <person name="Kikuchi J."/>
            <person name="Morita H."/>
            <person name="Hattori M."/>
            <person name="Ohno H."/>
        </authorList>
    </citation>
    <scope>NUCLEOTIDE SEQUENCE [LARGE SCALE GENOMIC DNA]</scope>
    <source>
        <strain>ATCC 15707 / DSM 20219 / CCUG 28903 / JCM 1217 / NCIMB 702259 / NCTC 11818 / E194b</strain>
    </source>
</reference>
<protein>
    <recommendedName>
        <fullName evidence="4">Alpha-L-arabinofuranosidase</fullName>
        <ecNumber evidence="3">3.2.1.55</ecNumber>
    </recommendedName>
    <alternativeName>
        <fullName evidence="5">Non-reducing end alpha-L-arabinofuranosidase</fullName>
    </alternativeName>
</protein>
<comment type="function">
    <text evidence="3">Involved in the type II arabinogalactan (AG) side chains degradation (PubMed:30564851). Releases arabinofuranose (Araf) from alpha-1,3-Araf-substituted beta-1,6-galactooligosaccharides (PubMed:30564851). Can use radish root AGP, larch AG and arabinan. Shows weaker activity with gum arabic and arabinoxylan (PubMed:30564851).</text>
</comment>
<comment type="catalytic activity">
    <reaction evidence="3">
        <text>Hydrolysis of terminal non-reducing alpha-L-arabinofuranoside residues in alpha-L-arabinosides.</text>
        <dbReference type="EC" id="3.2.1.55"/>
    </reaction>
</comment>
<comment type="biophysicochemical properties">
    <kinetics>
        <KM evidence="3">7.86 mg/ml for larch arabinogalactan</KM>
        <text evidence="3">kcat is 220 sec(-1) with larch arabinogalactan as substrate.</text>
    </kinetics>
    <phDependence>
        <text evidence="3">Optimum pH is 5.5 with larch arabinogalactan as substrate.</text>
    </phDependence>
    <temperatureDependence>
        <text evidence="3">Optimum temperature is 50 degrees Celsius with larch arabinogalactan as substrate.</text>
    </temperatureDependence>
</comment>
<comment type="subcellular location">
    <subcellularLocation>
        <location evidence="5">Cell membrane</location>
        <topology evidence="1">Single-pass membrane protein</topology>
    </subcellularLocation>
</comment>
<comment type="similarity">
    <text evidence="5">Belongs to the glycosyl hydrolase 43 family.</text>
</comment>
<organism>
    <name type="scientific">Bifidobacterium longum subsp. longum (strain ATCC 15707 / DSM 20219 / JCM 1217 / NCTC 11818 / E194b)</name>
    <dbReference type="NCBI Taxonomy" id="565042"/>
    <lineage>
        <taxon>Bacteria</taxon>
        <taxon>Bacillati</taxon>
        <taxon>Actinomycetota</taxon>
        <taxon>Actinomycetes</taxon>
        <taxon>Bifidobacteriales</taxon>
        <taxon>Bifidobacteriaceae</taxon>
        <taxon>Bifidobacterium</taxon>
    </lineage>
</organism>
<proteinExistence type="evidence at protein level"/>
<accession>A0A3R0A696</accession>